<dbReference type="EMBL" id="AM039952">
    <property type="protein sequence ID" value="CAJ24518.1"/>
    <property type="molecule type" value="Genomic_DNA"/>
</dbReference>
<dbReference type="RefSeq" id="WP_008570977.1">
    <property type="nucleotide sequence ID" value="NZ_CP017190.1"/>
</dbReference>
<dbReference type="SMR" id="Q3BRP3"/>
<dbReference type="STRING" id="456327.BJD11_08680"/>
<dbReference type="GeneID" id="97510976"/>
<dbReference type="KEGG" id="xcv:XCV2839"/>
<dbReference type="eggNOG" id="COG0779">
    <property type="taxonomic scope" value="Bacteria"/>
</dbReference>
<dbReference type="HOGENOM" id="CLU_070525_1_1_6"/>
<dbReference type="Proteomes" id="UP000007069">
    <property type="component" value="Chromosome"/>
</dbReference>
<dbReference type="GO" id="GO:0005829">
    <property type="term" value="C:cytosol"/>
    <property type="evidence" value="ECO:0007669"/>
    <property type="project" value="TreeGrafter"/>
</dbReference>
<dbReference type="GO" id="GO:0000028">
    <property type="term" value="P:ribosomal small subunit assembly"/>
    <property type="evidence" value="ECO:0007669"/>
    <property type="project" value="TreeGrafter"/>
</dbReference>
<dbReference type="GO" id="GO:0006412">
    <property type="term" value="P:translation"/>
    <property type="evidence" value="ECO:0007669"/>
    <property type="project" value="TreeGrafter"/>
</dbReference>
<dbReference type="CDD" id="cd01734">
    <property type="entry name" value="YlxS_C"/>
    <property type="match status" value="1"/>
</dbReference>
<dbReference type="FunFam" id="3.30.300.70:FF:000001">
    <property type="entry name" value="Ribosome maturation factor RimP"/>
    <property type="match status" value="1"/>
</dbReference>
<dbReference type="Gene3D" id="2.30.30.180">
    <property type="entry name" value="Ribosome maturation factor RimP, C-terminal domain"/>
    <property type="match status" value="1"/>
</dbReference>
<dbReference type="Gene3D" id="3.30.300.70">
    <property type="entry name" value="RimP-like superfamily, N-terminal"/>
    <property type="match status" value="1"/>
</dbReference>
<dbReference type="HAMAP" id="MF_01077">
    <property type="entry name" value="RimP"/>
    <property type="match status" value="1"/>
</dbReference>
<dbReference type="InterPro" id="IPR003728">
    <property type="entry name" value="Ribosome_maturation_RimP"/>
</dbReference>
<dbReference type="InterPro" id="IPR028998">
    <property type="entry name" value="RimP_C"/>
</dbReference>
<dbReference type="InterPro" id="IPR036847">
    <property type="entry name" value="RimP_C_sf"/>
</dbReference>
<dbReference type="InterPro" id="IPR028989">
    <property type="entry name" value="RimP_N"/>
</dbReference>
<dbReference type="InterPro" id="IPR035956">
    <property type="entry name" value="RimP_N_sf"/>
</dbReference>
<dbReference type="NCBIfam" id="NF000927">
    <property type="entry name" value="PRK00092.1-1"/>
    <property type="match status" value="1"/>
</dbReference>
<dbReference type="NCBIfam" id="NF000931">
    <property type="entry name" value="PRK00092.2-3"/>
    <property type="match status" value="1"/>
</dbReference>
<dbReference type="PANTHER" id="PTHR33867">
    <property type="entry name" value="RIBOSOME MATURATION FACTOR RIMP"/>
    <property type="match status" value="1"/>
</dbReference>
<dbReference type="PANTHER" id="PTHR33867:SF1">
    <property type="entry name" value="RIBOSOME MATURATION FACTOR RIMP"/>
    <property type="match status" value="1"/>
</dbReference>
<dbReference type="Pfam" id="PF17384">
    <property type="entry name" value="DUF150_C"/>
    <property type="match status" value="1"/>
</dbReference>
<dbReference type="Pfam" id="PF02576">
    <property type="entry name" value="RimP_N"/>
    <property type="match status" value="1"/>
</dbReference>
<dbReference type="SUPFAM" id="SSF74942">
    <property type="entry name" value="YhbC-like, C-terminal domain"/>
    <property type="match status" value="1"/>
</dbReference>
<dbReference type="SUPFAM" id="SSF75420">
    <property type="entry name" value="YhbC-like, N-terminal domain"/>
    <property type="match status" value="1"/>
</dbReference>
<organism>
    <name type="scientific">Xanthomonas euvesicatoria pv. vesicatoria (strain 85-10)</name>
    <name type="common">Xanthomonas campestris pv. vesicatoria</name>
    <dbReference type="NCBI Taxonomy" id="316273"/>
    <lineage>
        <taxon>Bacteria</taxon>
        <taxon>Pseudomonadati</taxon>
        <taxon>Pseudomonadota</taxon>
        <taxon>Gammaproteobacteria</taxon>
        <taxon>Lysobacterales</taxon>
        <taxon>Lysobacteraceae</taxon>
        <taxon>Xanthomonas</taxon>
    </lineage>
</organism>
<feature type="chain" id="PRO_0000229293" description="Ribosome maturation factor RimP">
    <location>
        <begin position="1"/>
        <end position="196"/>
    </location>
</feature>
<feature type="region of interest" description="Disordered" evidence="2">
    <location>
        <begin position="164"/>
        <end position="196"/>
    </location>
</feature>
<feature type="compositionally biased region" description="Basic residues" evidence="2">
    <location>
        <begin position="173"/>
        <end position="182"/>
    </location>
</feature>
<gene>
    <name evidence="1" type="primary">rimP</name>
    <name type="ordered locus">XCV2839</name>
</gene>
<proteinExistence type="inferred from homology"/>
<sequence length="196" mass="21317">MSEKATEIANLLSPTVESLGLELLGVEYLPAPGGATLRLYIDVPLAEQPERVINVDDCERVSREVSAQLDVEDPISGNYTLEVSSPGVDRPLFTLEQFARHTGESAKIVLKLAQDGRRRFQGEILRIDAEAEAVVFAVDGKDVQIGYDNIDKARIVPDWVALGLAPQKPNKPGPKKPGHEKKKPSNESAAGKPRAE</sequence>
<protein>
    <recommendedName>
        <fullName evidence="1">Ribosome maturation factor RimP</fullName>
    </recommendedName>
</protein>
<keyword id="KW-0963">Cytoplasm</keyword>
<keyword id="KW-0690">Ribosome biogenesis</keyword>
<name>RIMP_XANE5</name>
<evidence type="ECO:0000255" key="1">
    <source>
        <dbReference type="HAMAP-Rule" id="MF_01077"/>
    </source>
</evidence>
<evidence type="ECO:0000256" key="2">
    <source>
        <dbReference type="SAM" id="MobiDB-lite"/>
    </source>
</evidence>
<reference key="1">
    <citation type="journal article" date="2005" name="J. Bacteriol.">
        <title>Insights into genome plasticity and pathogenicity of the plant pathogenic Bacterium Xanthomonas campestris pv. vesicatoria revealed by the complete genome sequence.</title>
        <authorList>
            <person name="Thieme F."/>
            <person name="Koebnik R."/>
            <person name="Bekel T."/>
            <person name="Berger C."/>
            <person name="Boch J."/>
            <person name="Buettner D."/>
            <person name="Caldana C."/>
            <person name="Gaigalat L."/>
            <person name="Goesmann A."/>
            <person name="Kay S."/>
            <person name="Kirchner O."/>
            <person name="Lanz C."/>
            <person name="Linke B."/>
            <person name="McHardy A.C."/>
            <person name="Meyer F."/>
            <person name="Mittenhuber G."/>
            <person name="Nies D.H."/>
            <person name="Niesbach-Kloesgen U."/>
            <person name="Patschkowski T."/>
            <person name="Rueckert C."/>
            <person name="Rupp O."/>
            <person name="Schneiker S."/>
            <person name="Schuster S.C."/>
            <person name="Vorhoelter F.J."/>
            <person name="Weber E."/>
            <person name="Puehler A."/>
            <person name="Bonas U."/>
            <person name="Bartels D."/>
            <person name="Kaiser O."/>
        </authorList>
    </citation>
    <scope>NUCLEOTIDE SEQUENCE [LARGE SCALE GENOMIC DNA]</scope>
    <source>
        <strain>85-10</strain>
    </source>
</reference>
<accession>Q3BRP3</accession>
<comment type="function">
    <text evidence="1">Required for maturation of 30S ribosomal subunits.</text>
</comment>
<comment type="subcellular location">
    <subcellularLocation>
        <location evidence="1">Cytoplasm</location>
    </subcellularLocation>
</comment>
<comment type="similarity">
    <text evidence="1">Belongs to the RimP family.</text>
</comment>